<protein>
    <recommendedName>
        <fullName evidence="1">Large ribosomal subunit protein bL28</fullName>
    </recommendedName>
    <alternativeName>
        <fullName evidence="2">50S ribosomal protein L28</fullName>
    </alternativeName>
</protein>
<sequence length="86" mass="9789">MSKICQITGKKAMIGNNVSHSKRRTKRTFDVNLFTKKFYYVEQDCWISLNICANGLRVINKKGLDAALNEAVTKGYCDWKSIKIIG</sequence>
<accession>A6L5E4</accession>
<feature type="chain" id="PRO_1000007173" description="Large ribosomal subunit protein bL28">
    <location>
        <begin position="1"/>
        <end position="86"/>
    </location>
</feature>
<comment type="similarity">
    <text evidence="1">Belongs to the bacterial ribosomal protein bL28 family.</text>
</comment>
<gene>
    <name evidence="1" type="primary">rpmB</name>
    <name type="ordered locus">BVU_3279</name>
</gene>
<organism>
    <name type="scientific">Phocaeicola vulgatus (strain ATCC 8482 / DSM 1447 / JCM 5826 / CCUG 4940 / NBRC 14291 / NCTC 11154)</name>
    <name type="common">Bacteroides vulgatus</name>
    <dbReference type="NCBI Taxonomy" id="435590"/>
    <lineage>
        <taxon>Bacteria</taxon>
        <taxon>Pseudomonadati</taxon>
        <taxon>Bacteroidota</taxon>
        <taxon>Bacteroidia</taxon>
        <taxon>Bacteroidales</taxon>
        <taxon>Bacteroidaceae</taxon>
        <taxon>Phocaeicola</taxon>
    </lineage>
</organism>
<evidence type="ECO:0000255" key="1">
    <source>
        <dbReference type="HAMAP-Rule" id="MF_00373"/>
    </source>
</evidence>
<evidence type="ECO:0000305" key="2"/>
<name>RL28_PHOV8</name>
<reference key="1">
    <citation type="journal article" date="2007" name="PLoS Biol.">
        <title>Evolution of symbiotic bacteria in the distal human intestine.</title>
        <authorList>
            <person name="Xu J."/>
            <person name="Mahowald M.A."/>
            <person name="Ley R.E."/>
            <person name="Lozupone C.A."/>
            <person name="Hamady M."/>
            <person name="Martens E.C."/>
            <person name="Henrissat B."/>
            <person name="Coutinho P.M."/>
            <person name="Minx P."/>
            <person name="Latreille P."/>
            <person name="Cordum H."/>
            <person name="Van Brunt A."/>
            <person name="Kim K."/>
            <person name="Fulton R.S."/>
            <person name="Fulton L.A."/>
            <person name="Clifton S.W."/>
            <person name="Wilson R.K."/>
            <person name="Knight R.D."/>
            <person name="Gordon J.I."/>
        </authorList>
    </citation>
    <scope>NUCLEOTIDE SEQUENCE [LARGE SCALE GENOMIC DNA]</scope>
    <source>
        <strain>ATCC 8482 / DSM 1447 / JCM 5826 / CCUG 4940 / NBRC 14291 / NCTC 11154</strain>
    </source>
</reference>
<proteinExistence type="inferred from homology"/>
<keyword id="KW-0687">Ribonucleoprotein</keyword>
<keyword id="KW-0689">Ribosomal protein</keyword>
<dbReference type="EMBL" id="CP000139">
    <property type="protein sequence ID" value="ABR40908.1"/>
    <property type="molecule type" value="Genomic_DNA"/>
</dbReference>
<dbReference type="RefSeq" id="WP_005841284.1">
    <property type="nucleotide sequence ID" value="NZ_JANSWM010000071.1"/>
</dbReference>
<dbReference type="SMR" id="A6L5E4"/>
<dbReference type="STRING" id="435590.BVU_3279"/>
<dbReference type="PaxDb" id="435590-BVU_3279"/>
<dbReference type="GeneID" id="93447319"/>
<dbReference type="KEGG" id="bvu:BVU_3279"/>
<dbReference type="eggNOG" id="COG0227">
    <property type="taxonomic scope" value="Bacteria"/>
</dbReference>
<dbReference type="HOGENOM" id="CLU_064548_3_1_10"/>
<dbReference type="BioCyc" id="BVUL435590:G1G59-3401-MONOMER"/>
<dbReference type="Proteomes" id="UP000002861">
    <property type="component" value="Chromosome"/>
</dbReference>
<dbReference type="GO" id="GO:1990904">
    <property type="term" value="C:ribonucleoprotein complex"/>
    <property type="evidence" value="ECO:0007669"/>
    <property type="project" value="UniProtKB-KW"/>
</dbReference>
<dbReference type="GO" id="GO:0005840">
    <property type="term" value="C:ribosome"/>
    <property type="evidence" value="ECO:0007669"/>
    <property type="project" value="UniProtKB-KW"/>
</dbReference>
<dbReference type="GO" id="GO:0003735">
    <property type="term" value="F:structural constituent of ribosome"/>
    <property type="evidence" value="ECO:0007669"/>
    <property type="project" value="InterPro"/>
</dbReference>
<dbReference type="GO" id="GO:0006412">
    <property type="term" value="P:translation"/>
    <property type="evidence" value="ECO:0007669"/>
    <property type="project" value="UniProtKB-UniRule"/>
</dbReference>
<dbReference type="FunFam" id="2.30.170.40:FF:000004">
    <property type="entry name" value="50S ribosomal protein L28"/>
    <property type="match status" value="1"/>
</dbReference>
<dbReference type="Gene3D" id="2.30.170.40">
    <property type="entry name" value="Ribosomal protein L28/L24"/>
    <property type="match status" value="1"/>
</dbReference>
<dbReference type="HAMAP" id="MF_00373">
    <property type="entry name" value="Ribosomal_bL28"/>
    <property type="match status" value="1"/>
</dbReference>
<dbReference type="InterPro" id="IPR026569">
    <property type="entry name" value="Ribosomal_bL28"/>
</dbReference>
<dbReference type="InterPro" id="IPR034704">
    <property type="entry name" value="Ribosomal_bL28/bL31-like_sf"/>
</dbReference>
<dbReference type="InterPro" id="IPR001383">
    <property type="entry name" value="Ribosomal_bL28_bact-type"/>
</dbReference>
<dbReference type="InterPro" id="IPR037147">
    <property type="entry name" value="Ribosomal_bL28_sf"/>
</dbReference>
<dbReference type="NCBIfam" id="TIGR00009">
    <property type="entry name" value="L28"/>
    <property type="match status" value="1"/>
</dbReference>
<dbReference type="PANTHER" id="PTHR13528">
    <property type="entry name" value="39S RIBOSOMAL PROTEIN L28, MITOCHONDRIAL"/>
    <property type="match status" value="1"/>
</dbReference>
<dbReference type="PANTHER" id="PTHR13528:SF2">
    <property type="entry name" value="LARGE RIBOSOMAL SUBUNIT PROTEIN BL28M"/>
    <property type="match status" value="1"/>
</dbReference>
<dbReference type="Pfam" id="PF00830">
    <property type="entry name" value="Ribosomal_L28"/>
    <property type="match status" value="1"/>
</dbReference>
<dbReference type="SUPFAM" id="SSF143800">
    <property type="entry name" value="L28p-like"/>
    <property type="match status" value="1"/>
</dbReference>